<proteinExistence type="evidence at protein level"/>
<feature type="chain" id="PRO_0000035957" description="Small ubiquitin-related modifier 3">
    <location>
        <begin position="1"/>
        <end position="92"/>
    </location>
</feature>
<feature type="propeptide" id="PRO_0000035958" evidence="5 7">
    <location>
        <begin position="93"/>
        <end position="103"/>
    </location>
</feature>
<feature type="domain" description="Ubiquitin-like" evidence="2">
    <location>
        <begin position="15"/>
        <end position="92"/>
    </location>
</feature>
<feature type="cross-link" description="Glycyl lysine isopeptide (Lys-Gly) (interchain with G-Cter in SUMO2)" evidence="20">
    <location>
        <position position="5"/>
    </location>
</feature>
<feature type="cross-link" description="Glycyl lysine isopeptide (Lys-Gly) (interchain with G-Cter in SUMO2)" evidence="18 20">
    <location>
        <position position="7"/>
    </location>
</feature>
<feature type="cross-link" description="Glycyl lysine isopeptide (Lys-Gly) (interchain with G-Cter in SUMO); alternate">
    <location>
        <position position="11"/>
    </location>
</feature>
<feature type="cross-link" description="Glycyl lysine isopeptide (Lys-Gly) (interchain with G-Cter in SUMO2); alternate" evidence="16 17 18 19 20">
    <location>
        <position position="11"/>
    </location>
</feature>
<feature type="cross-link" description="Glycyl lysine isopeptide (Gly-Lys) (interchain with K-? in acceptor proteins)">
    <location>
        <position position="92"/>
    </location>
</feature>
<feature type="splice variant" id="VSP_054693" description="In isoform 2." evidence="12">
    <original>Q</original>
    <variation>QVRHLAPPQSLPVCALVLCVPGIPRARASRGWTQMQLPE</variation>
    <location>
        <position position="50"/>
    </location>
</feature>
<feature type="sequence variant" id="VAR_052692" description="In dbSNP:rs1051311." evidence="10">
    <original>P</original>
    <variation>S</variation>
    <location>
        <position position="38"/>
    </location>
</feature>
<feature type="mutagenesis site" description="Abolishes the formation of poly(SUMO) chains." evidence="3">
    <original>K</original>
    <variation>R</variation>
    <location>
        <position position="11"/>
    </location>
</feature>
<feature type="mutagenesis site" description="Impaired interaction with USP25; when associated with A-34." evidence="8">
    <original>I</original>
    <variation>A</variation>
    <location>
        <position position="33"/>
    </location>
</feature>
<feature type="mutagenesis site" description="Impaired interaction with USP25; when associated with A-33." evidence="8">
    <original>K</original>
    <variation>A</variation>
    <location>
        <position position="34"/>
    </location>
</feature>
<feature type="sequence conflict" description="In Ref. 5; BAD96311." evidence="14" ref="5">
    <original>K</original>
    <variation>E</variation>
    <location>
        <position position="32"/>
    </location>
</feature>
<feature type="sequence conflict" description="In Ref. 1; CAA67896." evidence="14" ref="1">
    <original>E</original>
    <variation>R</variation>
    <location>
        <position position="76"/>
    </location>
</feature>
<feature type="strand" evidence="23">
    <location>
        <begin position="13"/>
        <end position="15"/>
    </location>
</feature>
<feature type="strand" evidence="24">
    <location>
        <begin position="17"/>
        <end position="22"/>
    </location>
</feature>
<feature type="turn" evidence="21">
    <location>
        <begin position="24"/>
        <end position="26"/>
    </location>
</feature>
<feature type="strand" evidence="24">
    <location>
        <begin position="28"/>
        <end position="33"/>
    </location>
</feature>
<feature type="strand" evidence="21">
    <location>
        <begin position="35"/>
        <end position="37"/>
    </location>
</feature>
<feature type="helix" evidence="24">
    <location>
        <begin position="40"/>
        <end position="49"/>
    </location>
</feature>
<feature type="turn" evidence="24">
    <location>
        <begin position="54"/>
        <end position="56"/>
    </location>
</feature>
<feature type="strand" evidence="24">
    <location>
        <begin position="57"/>
        <end position="61"/>
    </location>
</feature>
<feature type="turn" evidence="24">
    <location>
        <begin position="72"/>
        <end position="76"/>
    </location>
</feature>
<feature type="strand" evidence="24">
    <location>
        <begin position="81"/>
        <end position="87"/>
    </location>
</feature>
<feature type="strand" evidence="22">
    <location>
        <begin position="90"/>
        <end position="92"/>
    </location>
</feature>
<organism>
    <name type="scientific">Homo sapiens</name>
    <name type="common">Human</name>
    <dbReference type="NCBI Taxonomy" id="9606"/>
    <lineage>
        <taxon>Eukaryota</taxon>
        <taxon>Metazoa</taxon>
        <taxon>Chordata</taxon>
        <taxon>Craniata</taxon>
        <taxon>Vertebrata</taxon>
        <taxon>Euteleostomi</taxon>
        <taxon>Mammalia</taxon>
        <taxon>Eutheria</taxon>
        <taxon>Euarchontoglires</taxon>
        <taxon>Primates</taxon>
        <taxon>Haplorrhini</taxon>
        <taxon>Catarrhini</taxon>
        <taxon>Hominidae</taxon>
        <taxon>Homo</taxon>
    </lineage>
</organism>
<reference key="1">
    <citation type="journal article" date="1997" name="Genomics">
        <title>SMT3A, a human homologue of the S. cerevisiae SMT3 gene, maps to chromosome 21qter and defines a novel gene family.</title>
        <authorList>
            <person name="Lapenta V."/>
            <person name="Chiurazzi P."/>
            <person name="van der Spek P.J."/>
            <person name="Pizzuti A."/>
            <person name="Hanaoka F."/>
            <person name="Brahe C."/>
        </authorList>
    </citation>
    <scope>NUCLEOTIDE SEQUENCE [MRNA] (ISOFORM 1)</scope>
    <scope>VARIANT SER-38</scope>
    <source>
        <tissue>Brain</tissue>
    </source>
</reference>
<reference key="2">
    <citation type="submission" date="2004-10" db="EMBL/GenBank/DDBJ databases">
        <title>Cloning of human full-length CDSs in BD Creator(TM) system donor vector.</title>
        <authorList>
            <person name="Kalnine N."/>
            <person name="Chen X."/>
            <person name="Rolfs A."/>
            <person name="Halleck A."/>
            <person name="Hines L."/>
            <person name="Eisenstein S."/>
            <person name="Koundinya M."/>
            <person name="Raphael J."/>
            <person name="Moreira D."/>
            <person name="Kelley T."/>
            <person name="LaBaer J."/>
            <person name="Lin Y."/>
            <person name="Phelan M."/>
            <person name="Farmer A."/>
        </authorList>
    </citation>
    <scope>NUCLEOTIDE SEQUENCE [LARGE SCALE MRNA] (ISOFORM 1)</scope>
</reference>
<reference key="3">
    <citation type="submission" date="2004-06" db="EMBL/GenBank/DDBJ databases">
        <title>Cloning of human full open reading frames in Gateway(TM) system entry vector (pDONR201).</title>
        <authorList>
            <person name="Halleck A."/>
            <person name="Ebert L."/>
            <person name="Mkoundinya M."/>
            <person name="Schick M."/>
            <person name="Eisenstein S."/>
            <person name="Neubert P."/>
            <person name="Kstrang K."/>
            <person name="Schatten R."/>
            <person name="Shen B."/>
            <person name="Henze S."/>
            <person name="Mar W."/>
            <person name="Korn B."/>
            <person name="Zuo D."/>
            <person name="Hu Y."/>
            <person name="LaBaer J."/>
        </authorList>
    </citation>
    <scope>NUCLEOTIDE SEQUENCE [LARGE SCALE MRNA] (ISOFORM 1)</scope>
</reference>
<reference key="4">
    <citation type="journal article" date="2004" name="Nat. Genet.">
        <title>Complete sequencing and characterization of 21,243 full-length human cDNAs.</title>
        <authorList>
            <person name="Ota T."/>
            <person name="Suzuki Y."/>
            <person name="Nishikawa T."/>
            <person name="Otsuki T."/>
            <person name="Sugiyama T."/>
            <person name="Irie R."/>
            <person name="Wakamatsu A."/>
            <person name="Hayashi K."/>
            <person name="Sato H."/>
            <person name="Nagai K."/>
            <person name="Kimura K."/>
            <person name="Makita H."/>
            <person name="Sekine M."/>
            <person name="Obayashi M."/>
            <person name="Nishi T."/>
            <person name="Shibahara T."/>
            <person name="Tanaka T."/>
            <person name="Ishii S."/>
            <person name="Yamamoto J."/>
            <person name="Saito K."/>
            <person name="Kawai Y."/>
            <person name="Isono Y."/>
            <person name="Nakamura Y."/>
            <person name="Nagahari K."/>
            <person name="Murakami K."/>
            <person name="Yasuda T."/>
            <person name="Iwayanagi T."/>
            <person name="Wagatsuma M."/>
            <person name="Shiratori A."/>
            <person name="Sudo H."/>
            <person name="Hosoiri T."/>
            <person name="Kaku Y."/>
            <person name="Kodaira H."/>
            <person name="Kondo H."/>
            <person name="Sugawara M."/>
            <person name="Takahashi M."/>
            <person name="Kanda K."/>
            <person name="Yokoi T."/>
            <person name="Furuya T."/>
            <person name="Kikkawa E."/>
            <person name="Omura Y."/>
            <person name="Abe K."/>
            <person name="Kamihara K."/>
            <person name="Katsuta N."/>
            <person name="Sato K."/>
            <person name="Tanikawa M."/>
            <person name="Yamazaki M."/>
            <person name="Ninomiya K."/>
            <person name="Ishibashi T."/>
            <person name="Yamashita H."/>
            <person name="Murakawa K."/>
            <person name="Fujimori K."/>
            <person name="Tanai H."/>
            <person name="Kimata M."/>
            <person name="Watanabe M."/>
            <person name="Hiraoka S."/>
            <person name="Chiba Y."/>
            <person name="Ishida S."/>
            <person name="Ono Y."/>
            <person name="Takiguchi S."/>
            <person name="Watanabe S."/>
            <person name="Yosida M."/>
            <person name="Hotuta T."/>
            <person name="Kusano J."/>
            <person name="Kanehori K."/>
            <person name="Takahashi-Fujii A."/>
            <person name="Hara H."/>
            <person name="Tanase T.-O."/>
            <person name="Nomura Y."/>
            <person name="Togiya S."/>
            <person name="Komai F."/>
            <person name="Hara R."/>
            <person name="Takeuchi K."/>
            <person name="Arita M."/>
            <person name="Imose N."/>
            <person name="Musashino K."/>
            <person name="Yuuki H."/>
            <person name="Oshima A."/>
            <person name="Sasaki N."/>
            <person name="Aotsuka S."/>
            <person name="Yoshikawa Y."/>
            <person name="Matsunawa H."/>
            <person name="Ichihara T."/>
            <person name="Shiohata N."/>
            <person name="Sano S."/>
            <person name="Moriya S."/>
            <person name="Momiyama H."/>
            <person name="Satoh N."/>
            <person name="Takami S."/>
            <person name="Terashima Y."/>
            <person name="Suzuki O."/>
            <person name="Nakagawa S."/>
            <person name="Senoh A."/>
            <person name="Mizoguchi H."/>
            <person name="Goto Y."/>
            <person name="Shimizu F."/>
            <person name="Wakebe H."/>
            <person name="Hishigaki H."/>
            <person name="Watanabe T."/>
            <person name="Sugiyama A."/>
            <person name="Takemoto M."/>
            <person name="Kawakami B."/>
            <person name="Yamazaki M."/>
            <person name="Watanabe K."/>
            <person name="Kumagai A."/>
            <person name="Itakura S."/>
            <person name="Fukuzumi Y."/>
            <person name="Fujimori Y."/>
            <person name="Komiyama M."/>
            <person name="Tashiro H."/>
            <person name="Tanigami A."/>
            <person name="Fujiwara T."/>
            <person name="Ono T."/>
            <person name="Yamada K."/>
            <person name="Fujii Y."/>
            <person name="Ozaki K."/>
            <person name="Hirao M."/>
            <person name="Ohmori Y."/>
            <person name="Kawabata A."/>
            <person name="Hikiji T."/>
            <person name="Kobatake N."/>
            <person name="Inagaki H."/>
            <person name="Ikema Y."/>
            <person name="Okamoto S."/>
            <person name="Okitani R."/>
            <person name="Kawakami T."/>
            <person name="Noguchi S."/>
            <person name="Itoh T."/>
            <person name="Shigeta K."/>
            <person name="Senba T."/>
            <person name="Matsumura K."/>
            <person name="Nakajima Y."/>
            <person name="Mizuno T."/>
            <person name="Morinaga M."/>
            <person name="Sasaki M."/>
            <person name="Togashi T."/>
            <person name="Oyama M."/>
            <person name="Hata H."/>
            <person name="Watanabe M."/>
            <person name="Komatsu T."/>
            <person name="Mizushima-Sugano J."/>
            <person name="Satoh T."/>
            <person name="Shirai Y."/>
            <person name="Takahashi Y."/>
            <person name="Nakagawa K."/>
            <person name="Okumura K."/>
            <person name="Nagase T."/>
            <person name="Nomura N."/>
            <person name="Kikuchi H."/>
            <person name="Masuho Y."/>
            <person name="Yamashita R."/>
            <person name="Nakai K."/>
            <person name="Yada T."/>
            <person name="Nakamura Y."/>
            <person name="Ohara O."/>
            <person name="Isogai T."/>
            <person name="Sugano S."/>
        </authorList>
    </citation>
    <scope>NUCLEOTIDE SEQUENCE [LARGE SCALE MRNA] (ISOFORMS 1 AND 2)</scope>
    <source>
        <tissue>Brain cortex</tissue>
    </source>
</reference>
<reference key="5">
    <citation type="submission" date="2005-04" db="EMBL/GenBank/DDBJ databases">
        <authorList>
            <person name="Suzuki Y."/>
            <person name="Sugano S."/>
            <person name="Totoki Y."/>
            <person name="Toyoda A."/>
            <person name="Takeda T."/>
            <person name="Sakaki Y."/>
            <person name="Tanaka A."/>
            <person name="Yokoyama S."/>
        </authorList>
    </citation>
    <scope>NUCLEOTIDE SEQUENCE [LARGE SCALE MRNA] (ISOFORM 1)</scope>
    <source>
        <tissue>Coronary artery</tissue>
    </source>
</reference>
<reference key="6">
    <citation type="journal article" date="2000" name="Nature">
        <title>The DNA sequence of human chromosome 21.</title>
        <authorList>
            <person name="Hattori M."/>
            <person name="Fujiyama A."/>
            <person name="Taylor T.D."/>
            <person name="Watanabe H."/>
            <person name="Yada T."/>
            <person name="Park H.-S."/>
            <person name="Toyoda A."/>
            <person name="Ishii K."/>
            <person name="Totoki Y."/>
            <person name="Choi D.-K."/>
            <person name="Groner Y."/>
            <person name="Soeda E."/>
            <person name="Ohki M."/>
            <person name="Takagi T."/>
            <person name="Sakaki Y."/>
            <person name="Taudien S."/>
            <person name="Blechschmidt K."/>
            <person name="Polley A."/>
            <person name="Menzel U."/>
            <person name="Delabar J."/>
            <person name="Kumpf K."/>
            <person name="Lehmann R."/>
            <person name="Patterson D."/>
            <person name="Reichwald K."/>
            <person name="Rump A."/>
            <person name="Schillhabel M."/>
            <person name="Schudy A."/>
            <person name="Zimmermann W."/>
            <person name="Rosenthal A."/>
            <person name="Kudoh J."/>
            <person name="Shibuya K."/>
            <person name="Kawasaki K."/>
            <person name="Asakawa S."/>
            <person name="Shintani A."/>
            <person name="Sasaki T."/>
            <person name="Nagamine K."/>
            <person name="Mitsuyama S."/>
            <person name="Antonarakis S.E."/>
            <person name="Minoshima S."/>
            <person name="Shimizu N."/>
            <person name="Nordsiek G."/>
            <person name="Hornischer K."/>
            <person name="Brandt P."/>
            <person name="Scharfe M."/>
            <person name="Schoen O."/>
            <person name="Desario A."/>
            <person name="Reichelt J."/>
            <person name="Kauer G."/>
            <person name="Bloecker H."/>
            <person name="Ramser J."/>
            <person name="Beck A."/>
            <person name="Klages S."/>
            <person name="Hennig S."/>
            <person name="Riesselmann L."/>
            <person name="Dagand E."/>
            <person name="Wehrmeyer S."/>
            <person name="Borzym K."/>
            <person name="Gardiner K."/>
            <person name="Nizetic D."/>
            <person name="Francis F."/>
            <person name="Lehrach H."/>
            <person name="Reinhardt R."/>
            <person name="Yaspo M.-L."/>
        </authorList>
    </citation>
    <scope>NUCLEOTIDE SEQUENCE [LARGE SCALE GENOMIC DNA]</scope>
</reference>
<reference key="7">
    <citation type="submission" date="2005-09" db="EMBL/GenBank/DDBJ databases">
        <authorList>
            <person name="Mural R.J."/>
            <person name="Istrail S."/>
            <person name="Sutton G.G."/>
            <person name="Florea L."/>
            <person name="Halpern A.L."/>
            <person name="Mobarry C.M."/>
            <person name="Lippert R."/>
            <person name="Walenz B."/>
            <person name="Shatkay H."/>
            <person name="Dew I."/>
            <person name="Miller J.R."/>
            <person name="Flanigan M.J."/>
            <person name="Edwards N.J."/>
            <person name="Bolanos R."/>
            <person name="Fasulo D."/>
            <person name="Halldorsson B.V."/>
            <person name="Hannenhalli S."/>
            <person name="Turner R."/>
            <person name="Yooseph S."/>
            <person name="Lu F."/>
            <person name="Nusskern D.R."/>
            <person name="Shue B.C."/>
            <person name="Zheng X.H."/>
            <person name="Zhong F."/>
            <person name="Delcher A.L."/>
            <person name="Huson D.H."/>
            <person name="Kravitz S.A."/>
            <person name="Mouchard L."/>
            <person name="Reinert K."/>
            <person name="Remington K.A."/>
            <person name="Clark A.G."/>
            <person name="Waterman M.S."/>
            <person name="Eichler E.E."/>
            <person name="Adams M.D."/>
            <person name="Hunkapiller M.W."/>
            <person name="Myers E.W."/>
            <person name="Venter J.C."/>
        </authorList>
    </citation>
    <scope>NUCLEOTIDE SEQUENCE [LARGE SCALE GENOMIC DNA]</scope>
</reference>
<reference key="8">
    <citation type="journal article" date="2004" name="Genome Res.">
        <title>The status, quality, and expansion of the NIH full-length cDNA project: the Mammalian Gene Collection (MGC).</title>
        <authorList>
            <consortium name="The MGC Project Team"/>
        </authorList>
    </citation>
    <scope>NUCLEOTIDE SEQUENCE [LARGE SCALE MRNA] (ISOFORM 1)</scope>
    <source>
        <tissue>Bone marrow</tissue>
        <tissue>Kidney</tissue>
    </source>
</reference>
<reference key="9">
    <citation type="journal article" date="2000" name="J. Biol. Chem.">
        <title>Functional heterogeneity of small ubiquitin-related protein modifiers SUMO-1 versus SUMO-2/3.</title>
        <authorList>
            <person name="Saitoh H."/>
            <person name="Hinchey J."/>
        </authorList>
    </citation>
    <scope>IDENTIFICATION</scope>
</reference>
<reference key="10">
    <citation type="journal article" date="2001" name="J. Biol. Chem.">
        <title>Polymeric chains of SUMO-2 and SUMO-3 are conjugated to protein substrates by SAE1/SAE2 and Ubc9.</title>
        <authorList>
            <person name="Tatham M.H."/>
            <person name="Jaffray E."/>
            <person name="Vaughan O.A."/>
            <person name="Desterro J.M.P."/>
            <person name="Botting C.H."/>
            <person name="Naismith J.H."/>
            <person name="Hay R.T."/>
        </authorList>
    </citation>
    <scope>FUNCTION IN SUMOYLATION OF PML</scope>
    <scope>POLYSUMOYLATION</scope>
    <scope>INTERACTION WITH SAE1 AND UBE2I</scope>
    <scope>SUMOYLATION AT LYS-11</scope>
    <scope>IDENTIFICATION BY MASS SPECTROMETRY</scope>
    <scope>MUTAGENESIS OF LYS-11</scope>
</reference>
<reference key="11">
    <citation type="journal article" date="2002" name="Gene">
        <title>Molecular features of human ubiquitin-like SUMO genes and their encoded proteins.</title>
        <authorList>
            <person name="Su H.-L."/>
            <person name="Li S.S.-L."/>
        </authorList>
    </citation>
    <scope>SUBCELLULAR LOCATION</scope>
</reference>
<reference key="12">
    <citation type="journal article" date="2003" name="Biochemistry">
        <title>Role of an N-terminal site of Ubc9 in SUMO-1, -2, and -3 binding and conjugation.</title>
        <authorList>
            <person name="Tatham M.H."/>
            <person name="Kim S."/>
            <person name="Yu B."/>
            <person name="Jaffray E."/>
            <person name="Song J."/>
            <person name="Zheng J."/>
            <person name="Rodriguez M.S."/>
            <person name="Hay R.T."/>
            <person name="Chen Y."/>
        </authorList>
    </citation>
    <scope>INTERACTION WITH UBE2I</scope>
</reference>
<reference key="13">
    <citation type="journal article" date="2004" name="Structure">
        <title>A basis for SUMO protease specificity provided by analysis of human Senp2 and a Senp2-SUMO complex.</title>
        <authorList>
            <person name="Reverter D."/>
            <person name="Lima C.D."/>
        </authorList>
    </citation>
    <scope>CLEAVAGE</scope>
</reference>
<reference key="14">
    <citation type="journal article" date="2005" name="Biochem. J.">
        <title>Mapping residues of SUMO precursors essential in differential maturation by SUMO-specific protease, SENP1.</title>
        <authorList>
            <person name="Xu Z."/>
            <person name="Au S.W.N."/>
        </authorList>
    </citation>
    <scope>CLEAVAGE</scope>
    <scope>TISSUE SPECIFICITY</scope>
</reference>
<reference key="15">
    <citation type="journal article" date="2006" name="J. Biol. Chem.">
        <title>Characterization of a family of nucleolar SUMO-specific proteases with preference for SUMO-2 or SUMO-3.</title>
        <authorList>
            <person name="Gong L."/>
            <person name="Yeh E.T.H."/>
        </authorList>
    </citation>
    <scope>CLEAVAGE</scope>
</reference>
<reference key="16">
    <citation type="journal article" date="2008" name="Mol. Cell">
        <title>Mechanism and consequences for paralog-specific sumoylation of ubiquitin-specific protease 25.</title>
        <authorList>
            <person name="Meulmeester E."/>
            <person name="Kunze M."/>
            <person name="Hsiao H.H."/>
            <person name="Urlaub H."/>
            <person name="Melchior F."/>
        </authorList>
    </citation>
    <scope>FUNCTION IN SUMOYLATION OF USP25</scope>
    <scope>INTERACTION WITH USP25</scope>
    <scope>MUTAGENESIS OF ILE-33 AND LYS-34</scope>
</reference>
<reference key="17">
    <citation type="journal article" date="2011" name="BMC Syst. Biol.">
        <title>Initial characterization of the human central proteome.</title>
        <authorList>
            <person name="Burkard T.R."/>
            <person name="Planyavsky M."/>
            <person name="Kaupe I."/>
            <person name="Breitwieser F.P."/>
            <person name="Buerckstuemmer T."/>
            <person name="Bennett K.L."/>
            <person name="Superti-Furga G."/>
            <person name="Colinge J."/>
        </authorList>
    </citation>
    <scope>IDENTIFICATION BY MASS SPECTROMETRY [LARGE SCALE ANALYSIS]</scope>
</reference>
<reference key="18">
    <citation type="journal article" date="2011" name="J. Biol. Chem.">
        <title>SUMOylation and SUMO-interacting motif (SIM) of metastasis tumor antigen 1 (MTA1) synergistically regulate its transcriptional repressor function.</title>
        <authorList>
            <person name="Cong L."/>
            <person name="Pakala S.B."/>
            <person name="Ohshiro K."/>
            <person name="Li D.Q."/>
            <person name="Kumar R."/>
        </authorList>
    </citation>
    <scope>FUNCTION</scope>
    <scope>SUBCELLULAR LOCATION</scope>
</reference>
<reference key="19">
    <citation type="journal article" date="2013" name="Genes Dev.">
        <title>A SUMO-dependent interaction between Senataxin and the exosome, disrupted in the neurodegenerative disease AOA2, targets the exosome to sites of transcription-induced DNA damage.</title>
        <authorList>
            <person name="Richard P."/>
            <person name="Feng S."/>
            <person name="Manley J.L."/>
        </authorList>
    </citation>
    <scope>FUNCTION IN SUMOYLATION OF SETX</scope>
</reference>
<reference key="20">
    <citation type="journal article" date="2014" name="Nat. Struct. Mol. Biol.">
        <title>Uncovering global SUMOylation signaling networks in a site-specific manner.</title>
        <authorList>
            <person name="Hendriks I.A."/>
            <person name="D'Souza R.C."/>
            <person name="Yang B."/>
            <person name="Verlaan-de Vries M."/>
            <person name="Mann M."/>
            <person name="Vertegaal A.C."/>
        </authorList>
    </citation>
    <scope>SUMOYLATION [LARGE SCALE ANALYSIS] AT LYS-11</scope>
    <scope>IDENTIFICATION BY MASS SPECTROMETRY [LARGE SCALE ANALYSIS]</scope>
</reference>
<reference key="21">
    <citation type="journal article" date="2014" name="Proc. Natl. Acad. Sci. U.S.A.">
        <title>Mapping of SUMO sites and analysis of SUMOylation changes induced by external stimuli.</title>
        <authorList>
            <person name="Impens F."/>
            <person name="Radoshevich L."/>
            <person name="Cossart P."/>
            <person name="Ribet D."/>
        </authorList>
    </citation>
    <scope>SUMOYLATION [LARGE SCALE ANALYSIS] AT LYS-11</scope>
    <scope>IDENTIFICATION BY MASS SPECTROMETRY [LARGE SCALE ANALYSIS]</scope>
</reference>
<reference key="22">
    <citation type="journal article" date="2015" name="Cell Rep.">
        <title>SUMO-2 orchestrates chromatin modifiers in response to DNA damage.</title>
        <authorList>
            <person name="Hendriks I.A."/>
            <person name="Treffers L.W."/>
            <person name="Verlaan-de Vries M."/>
            <person name="Olsen J.V."/>
            <person name="Vertegaal A.C."/>
        </authorList>
    </citation>
    <scope>SUMOYLATION [LARGE SCALE ANALYSIS] AT LYS-11</scope>
    <scope>IDENTIFICATION BY MASS SPECTROMETRY [LARGE SCALE ANALYSIS]</scope>
</reference>
<reference key="23">
    <citation type="journal article" date="2015" name="Mol. Cell. Proteomics">
        <title>System-wide analysis of SUMOylation dynamics in response to replication stress reveals novel small ubiquitin-like modified target proteins and acceptor lysines relevant for genome stability.</title>
        <authorList>
            <person name="Xiao Z."/>
            <person name="Chang J.G."/>
            <person name="Hendriks I.A."/>
            <person name="Sigurdsson J.O."/>
            <person name="Olsen J.V."/>
            <person name="Vertegaal A.C."/>
        </authorList>
    </citation>
    <scope>SUMOYLATION [LARGE SCALE ANALYSIS] AT LYS-7 AND LYS-11</scope>
    <scope>IDENTIFICATION BY MASS SPECTROMETRY [LARGE SCALE ANALYSIS]</scope>
</reference>
<reference key="24">
    <citation type="journal article" date="2017" name="Nat. Struct. Mol. Biol.">
        <title>Site-specific mapping of the human SUMO proteome reveals co-modification with phosphorylation.</title>
        <authorList>
            <person name="Hendriks I.A."/>
            <person name="Lyon D."/>
            <person name="Young C."/>
            <person name="Jensen L.J."/>
            <person name="Vertegaal A.C."/>
            <person name="Nielsen M.L."/>
        </authorList>
    </citation>
    <scope>SUMOYLATION [LARGE SCALE ANALYSIS] AT LYS-5; LYS-7 AND LYS-11</scope>
    <scope>IDENTIFICATION BY MASS SPECTROMETRY [LARGE SCALE ANALYSIS]</scope>
</reference>
<reference key="25">
    <citation type="journal article" date="2005" name="Biochemistry">
        <title>Solution structure of human SUMO-3 C47S and its binding surface for Ubc9.</title>
        <authorList>
            <person name="Ding H."/>
            <person name="Xu Y."/>
            <person name="Chen Q."/>
            <person name="Dai H."/>
            <person name="Tang Y."/>
            <person name="Wu J."/>
            <person name="Shi Y."/>
        </authorList>
    </citation>
    <scope>STRUCTURE BY NMR OF 14-92</scope>
</reference>
<reference key="26">
    <citation type="journal article" date="2006" name="Biochem. J.">
        <title>The structure of SENP1-SUMO-2 complex suggests a structural basis for discrimination between SUMO paralogues during processing.</title>
        <authorList>
            <person name="Shen L.N."/>
            <person name="Dong C."/>
            <person name="Liu H."/>
            <person name="Naismith J.H."/>
            <person name="Hay R.T."/>
        </authorList>
    </citation>
    <scope>X-RAY CRYSTALLOGRAPHY (3.2 ANGSTROMS) IN COMPLEX WITH SENP1</scope>
    <scope>CLEAVAGE</scope>
</reference>
<evidence type="ECO:0000250" key="1"/>
<evidence type="ECO:0000255" key="2">
    <source>
        <dbReference type="PROSITE-ProRule" id="PRU00214"/>
    </source>
</evidence>
<evidence type="ECO:0000269" key="3">
    <source>
    </source>
</evidence>
<evidence type="ECO:0000269" key="4">
    <source>
    </source>
</evidence>
<evidence type="ECO:0000269" key="5">
    <source>
    </source>
</evidence>
<evidence type="ECO:0000269" key="6">
    <source>
    </source>
</evidence>
<evidence type="ECO:0000269" key="7">
    <source>
    </source>
</evidence>
<evidence type="ECO:0000269" key="8">
    <source>
    </source>
</evidence>
<evidence type="ECO:0000269" key="9">
    <source>
    </source>
</evidence>
<evidence type="ECO:0000269" key="10">
    <source>
    </source>
</evidence>
<evidence type="ECO:0000303" key="11">
    <source>
    </source>
</evidence>
<evidence type="ECO:0000303" key="12">
    <source>
    </source>
</evidence>
<evidence type="ECO:0000303" key="13">
    <source>
    </source>
</evidence>
<evidence type="ECO:0000305" key="14"/>
<evidence type="ECO:0000312" key="15">
    <source>
        <dbReference type="HGNC" id="HGNC:11124"/>
    </source>
</evidence>
<evidence type="ECO:0007744" key="16">
    <source>
    </source>
</evidence>
<evidence type="ECO:0007744" key="17">
    <source>
    </source>
</evidence>
<evidence type="ECO:0007744" key="18">
    <source>
    </source>
</evidence>
<evidence type="ECO:0007744" key="19">
    <source>
    </source>
</evidence>
<evidence type="ECO:0007744" key="20">
    <source>
    </source>
</evidence>
<evidence type="ECO:0007829" key="21">
    <source>
        <dbReference type="PDB" id="1U4A"/>
    </source>
</evidence>
<evidence type="ECO:0007829" key="22">
    <source>
        <dbReference type="PDB" id="2IO1"/>
    </source>
</evidence>
<evidence type="ECO:0007829" key="23">
    <source>
        <dbReference type="PDB" id="2MP2"/>
    </source>
</evidence>
<evidence type="ECO:0007829" key="24">
    <source>
        <dbReference type="PDB" id="7R2E"/>
    </source>
</evidence>
<accession>P55854</accession>
<accession>B2R5X4</accession>
<accession>B4DUW4</accession>
<accession>Q53HI9</accession>
<accession>Q6FGD4</accession>
<accession>Q9BWR4</accession>
<name>SUMO3_HUMAN</name>
<comment type="function">
    <text evidence="3 8 9">Ubiquitin-like protein which can be covalently attached to target lysines either as a monomer or as a lysine-linked polymer. Does not seem to be involved in protein degradation and may function as an antagonist of ubiquitin in the degradation process. Plays a role in a number of cellular processes such as nuclear transport, DNA replication and repair, mitosis and signal transduction. Covalent attachment to its substrates requires prior activation by the E1 complex SAE1-SAE2 and linkage to the E2 enzyme UBE2I, and can be promoted by an E3 ligase such as PIAS1-4, RANBP2 or CBX4 (PubMed:11451954, PubMed:18538659, PubMed:21965678). Plays a role in the regulation of sumoylation status of SETX (PubMed:24105744).</text>
</comment>
<comment type="subunit">
    <text evidence="1 3 4 6 8">Covalently attached to a number of proteins. Interacts with BMAL1 (By similarity). Interacts with USP25 (via ts SIM domain); the interaction sumoylates USP25 and inhibits its ubiquitin hydrolyzing activity. Interacts with SAE2 and UBE2I.</text>
</comment>
<comment type="interaction">
    <interactant intactId="EBI-474067">
        <id>P55854</id>
    </interactant>
    <interactant intactId="EBI-930964">
        <id>P54253</id>
        <label>ATXN1</label>
    </interactant>
    <organismsDiffer>false</organismsDiffer>
    <experiments>6</experiments>
</comment>
<comment type="interaction">
    <interactant intactId="EBI-474067">
        <id>P55854</id>
    </interactant>
    <interactant intactId="EBI-25891409">
        <id>Q99700-5</id>
        <label>ATXN2</label>
    </interactant>
    <organismsDiffer>false</organismsDiffer>
    <experiments>3</experiments>
</comment>
<comment type="interaction">
    <interactant intactId="EBI-474067">
        <id>P55854</id>
    </interactant>
    <interactant intactId="EBI-2339854">
        <id>Q86X55</id>
        <label>CARM1</label>
    </interactant>
    <organismsDiffer>false</organismsDiffer>
    <experiments>2</experiments>
</comment>
<comment type="interaction">
    <interactant intactId="EBI-474067">
        <id>P55854</id>
    </interactant>
    <interactant intactId="EBI-11960181">
        <id>A4D161</id>
        <label>FAM221A</label>
    </interactant>
    <organismsDiffer>false</organismsDiffer>
    <experiments>3</experiments>
</comment>
<comment type="interaction">
    <interactant intactId="EBI-474067">
        <id>P55854</id>
    </interactant>
    <interactant intactId="EBI-466029">
        <id>P42858</id>
        <label>HTT</label>
    </interactant>
    <organismsDiffer>false</organismsDiffer>
    <experiments>9</experiments>
</comment>
<comment type="interaction">
    <interactant intactId="EBI-474067">
        <id>P55854</id>
    </interactant>
    <interactant intactId="EBI-607761">
        <id>O43290</id>
        <label>SART1</label>
    </interactant>
    <organismsDiffer>false</organismsDiffer>
    <experiments>2</experiments>
</comment>
<comment type="interaction">
    <interactant intactId="EBI-474067">
        <id>P55854</id>
    </interactant>
    <interactant intactId="EBI-714881">
        <id>Q9HC62</id>
        <label>SENP2</label>
    </interactant>
    <organismsDiffer>false</organismsDiffer>
    <experiments>7</experiments>
</comment>
<comment type="interaction">
    <interactant intactId="EBI-474067">
        <id>P55854</id>
    </interactant>
    <interactant intactId="EBI-751145">
        <id>P23497</id>
        <label>SP100</label>
    </interactant>
    <organismsDiffer>false</organismsDiffer>
    <experiments>2</experiments>
</comment>
<comment type="interaction">
    <interactant intactId="EBI-474067">
        <id>P55854</id>
    </interactant>
    <interactant intactId="EBI-2513899">
        <id>Q5W0Q7</id>
        <label>USPL1</label>
    </interactant>
    <organismsDiffer>false</organismsDiffer>
    <experiments>17</experiments>
</comment>
<comment type="interaction">
    <interactant intactId="EBI-474067">
        <id>P55854</id>
    </interactant>
    <interactant intactId="EBI-2515625">
        <id>Q86T24</id>
        <label>ZBTB33</label>
    </interactant>
    <organismsDiffer>false</organismsDiffer>
    <experiments>3</experiments>
</comment>
<comment type="interaction">
    <interactant intactId="EBI-474067">
        <id>P55854</id>
    </interactant>
    <interactant intactId="EBI-9995672">
        <id>O15060</id>
        <label>ZBTB39</label>
    </interactant>
    <organismsDiffer>false</organismsDiffer>
    <experiments>3</experiments>
</comment>
<comment type="interaction">
    <interactant intactId="EBI-474067">
        <id>P55854</id>
    </interactant>
    <interactant intactId="EBI-748373">
        <id>Q6PEW1</id>
        <label>ZCCHC12</label>
    </interactant>
    <organismsDiffer>false</organismsDiffer>
    <experiments>4</experiments>
</comment>
<comment type="interaction">
    <interactant intactId="EBI-474067">
        <id>P55854</id>
    </interactant>
    <interactant intactId="EBI-743906">
        <id>Q96IT1</id>
        <label>ZNF496</label>
    </interactant>
    <organismsDiffer>false</organismsDiffer>
    <experiments>3</experiments>
</comment>
<comment type="interaction">
    <interactant intactId="EBI-474067">
        <id>P55854</id>
    </interactant>
    <interactant intactId="EBI-413053">
        <id>P62990</id>
        <label>UBC</label>
    </interactant>
    <organismsDiffer>true</organismsDiffer>
    <experiments>2</experiments>
</comment>
<comment type="subcellular location">
    <subcellularLocation>
        <location>Cytoplasm</location>
    </subcellularLocation>
    <subcellularLocation>
        <location>Nucleus</location>
    </subcellularLocation>
    <subcellularLocation>
        <location evidence="1">Nucleus</location>
        <location evidence="1">PML body</location>
    </subcellularLocation>
</comment>
<comment type="alternative products">
    <event type="alternative splicing"/>
    <isoform>
        <id>P55854-1</id>
        <name>1</name>
        <sequence type="displayed"/>
    </isoform>
    <isoform>
        <id>P55854-2</id>
        <name>2</name>
        <sequence type="described" ref="VSP_054693"/>
    </isoform>
</comment>
<comment type="tissue specificity">
    <text evidence="5">Expressed predominantly in liver.</text>
</comment>
<comment type="PTM">
    <text>Polymeric chains can be formed through Lys-11 cross-linking.</text>
</comment>
<comment type="PTM">
    <text evidence="5 7">Cleavage of precursor form by SENP1, SENP2 or SENP5 is necessary for function.</text>
</comment>
<comment type="similarity">
    <text evidence="14">Belongs to the ubiquitin family. SUMO subfamily.</text>
</comment>
<comment type="online information" name="Wikipedia">
    <link uri="https://en.wikipedia.org/wiki/SUMO_protein"/>
    <text>SUMO protein entry</text>
</comment>
<dbReference type="EMBL" id="X99584">
    <property type="protein sequence ID" value="CAA67896.1"/>
    <property type="molecule type" value="mRNA"/>
</dbReference>
<dbReference type="EMBL" id="BT007008">
    <property type="protein sequence ID" value="AAP35654.1"/>
    <property type="molecule type" value="mRNA"/>
</dbReference>
<dbReference type="EMBL" id="CR542173">
    <property type="protein sequence ID" value="CAG46970.1"/>
    <property type="molecule type" value="mRNA"/>
</dbReference>
<dbReference type="EMBL" id="CR542188">
    <property type="protein sequence ID" value="CAG46985.1"/>
    <property type="molecule type" value="mRNA"/>
</dbReference>
<dbReference type="EMBL" id="AK222591">
    <property type="protein sequence ID" value="BAD96311.1"/>
    <property type="molecule type" value="mRNA"/>
</dbReference>
<dbReference type="EMBL" id="AK300822">
    <property type="protein sequence ID" value="BAG62476.1"/>
    <property type="molecule type" value="mRNA"/>
</dbReference>
<dbReference type="EMBL" id="AK312350">
    <property type="protein sequence ID" value="BAG35271.1"/>
    <property type="molecule type" value="mRNA"/>
</dbReference>
<dbReference type="EMBL" id="AL773603">
    <property type="status" value="NOT_ANNOTATED_CDS"/>
    <property type="molecule type" value="Genomic_DNA"/>
</dbReference>
<dbReference type="EMBL" id="CH471079">
    <property type="protein sequence ID" value="EAX09392.1"/>
    <property type="molecule type" value="Genomic_DNA"/>
</dbReference>
<dbReference type="EMBL" id="BC000036">
    <property type="protein sequence ID" value="AAH00036.1"/>
    <property type="molecule type" value="mRNA"/>
</dbReference>
<dbReference type="EMBL" id="BC008420">
    <property type="protein sequence ID" value="AAH08420.1"/>
    <property type="molecule type" value="mRNA"/>
</dbReference>
<dbReference type="CCDS" id="CCDS33587.1">
    <molecule id="P55854-1"/>
</dbReference>
<dbReference type="CCDS" id="CCDS68220.1">
    <molecule id="P55854-2"/>
</dbReference>
<dbReference type="RefSeq" id="NP_001273345.1">
    <molecule id="P55854-2"/>
    <property type="nucleotide sequence ID" value="NM_001286416.2"/>
</dbReference>
<dbReference type="RefSeq" id="NP_008867.2">
    <molecule id="P55854-1"/>
    <property type="nucleotide sequence ID" value="NM_006936.2"/>
</dbReference>
<dbReference type="PDB" id="1U4A">
    <property type="method" value="NMR"/>
    <property type="chains" value="A=14-92"/>
</dbReference>
<dbReference type="PDB" id="2IO1">
    <property type="method" value="X-ray"/>
    <property type="resolution" value="2.60 A"/>
    <property type="chains" value="B/D/F=14-103"/>
</dbReference>
<dbReference type="PDB" id="2MP2">
    <property type="method" value="NMR"/>
    <property type="chains" value="A=12-92, B=2-90"/>
</dbReference>
<dbReference type="PDB" id="6K5R">
    <property type="method" value="NMR"/>
    <property type="chains" value="A=15-91"/>
</dbReference>
<dbReference type="PDB" id="6NNQ">
    <property type="method" value="X-ray"/>
    <property type="resolution" value="2.62 A"/>
    <property type="chains" value="B=15-92"/>
</dbReference>
<dbReference type="PDB" id="7R2E">
    <property type="method" value="X-ray"/>
    <property type="resolution" value="1.74 A"/>
    <property type="chains" value="C/D=16-91"/>
</dbReference>
<dbReference type="PDB" id="7ZJU">
    <property type="method" value="X-ray"/>
    <property type="resolution" value="2.17 A"/>
    <property type="chains" value="B/D=2-91"/>
</dbReference>
<dbReference type="PDBsum" id="1U4A"/>
<dbReference type="PDBsum" id="2IO1"/>
<dbReference type="PDBsum" id="2MP2"/>
<dbReference type="PDBsum" id="6K5R"/>
<dbReference type="PDBsum" id="6NNQ"/>
<dbReference type="PDBsum" id="7R2E"/>
<dbReference type="PDBsum" id="7ZJU"/>
<dbReference type="BMRB" id="P55854"/>
<dbReference type="SMR" id="P55854"/>
<dbReference type="BioGRID" id="112496">
    <property type="interactions" value="119"/>
</dbReference>
<dbReference type="CORUM" id="P55854"/>
<dbReference type="DIP" id="DIP-29255N"/>
<dbReference type="ELM" id="P55854"/>
<dbReference type="FunCoup" id="P55854">
    <property type="interactions" value="2911"/>
</dbReference>
<dbReference type="IntAct" id="P55854">
    <property type="interactions" value="86"/>
</dbReference>
<dbReference type="MINT" id="P55854"/>
<dbReference type="ChEMBL" id="CHEMBL3885639"/>
<dbReference type="GlyGen" id="P55854">
    <property type="glycosylation" value="3 sites, 1 O-linked glycan (1 site)"/>
</dbReference>
<dbReference type="iPTMnet" id="P55854"/>
<dbReference type="PhosphoSitePlus" id="P55854"/>
<dbReference type="SwissPalm" id="P55854"/>
<dbReference type="BioMuta" id="SUMO3"/>
<dbReference type="DMDM" id="23503102"/>
<dbReference type="jPOST" id="P55854"/>
<dbReference type="MassIVE" id="P55854"/>
<dbReference type="PeptideAtlas" id="P55854"/>
<dbReference type="ProteomicsDB" id="5226"/>
<dbReference type="ProteomicsDB" id="56874">
    <molecule id="P55854-1"/>
</dbReference>
<dbReference type="Pumba" id="P55854"/>
<dbReference type="TopDownProteomics" id="P55854-1">
    <molecule id="P55854-1"/>
</dbReference>
<dbReference type="Antibodypedia" id="24332">
    <property type="antibodies" value="474 antibodies from 40 providers"/>
</dbReference>
<dbReference type="DNASU" id="6612"/>
<dbReference type="Ensembl" id="ENST00000332859.11">
    <molecule id="P55854-1"/>
    <property type="protein sequence ID" value="ENSP00000330343.7"/>
    <property type="gene ID" value="ENSG00000184900.16"/>
</dbReference>
<dbReference type="Ensembl" id="ENST00000411651.6">
    <molecule id="P55854-2"/>
    <property type="protein sequence ID" value="ENSP00000409666.2"/>
    <property type="gene ID" value="ENSG00000184900.16"/>
</dbReference>
<dbReference type="GeneID" id="6612"/>
<dbReference type="KEGG" id="hsa:6612"/>
<dbReference type="MANE-Select" id="ENST00000332859.11">
    <property type="protein sequence ID" value="ENSP00000330343.7"/>
    <property type="RefSeq nucleotide sequence ID" value="NM_006936.3"/>
    <property type="RefSeq protein sequence ID" value="NP_008867.2"/>
</dbReference>
<dbReference type="UCSC" id="uc002zfz.1">
    <molecule id="P55854-1"/>
    <property type="organism name" value="human"/>
</dbReference>
<dbReference type="AGR" id="HGNC:11124"/>
<dbReference type="CTD" id="6612"/>
<dbReference type="DisGeNET" id="6612"/>
<dbReference type="GeneCards" id="SUMO3"/>
<dbReference type="HGNC" id="HGNC:11124">
    <property type="gene designation" value="SUMO3"/>
</dbReference>
<dbReference type="HPA" id="ENSG00000184900">
    <property type="expression patterns" value="Low tissue specificity"/>
</dbReference>
<dbReference type="MIM" id="602231">
    <property type="type" value="gene"/>
</dbReference>
<dbReference type="neXtProt" id="NX_P55854"/>
<dbReference type="OpenTargets" id="ENSG00000184900"/>
<dbReference type="PharmGKB" id="PA35973"/>
<dbReference type="VEuPathDB" id="HostDB:ENSG00000184900"/>
<dbReference type="GeneTree" id="ENSGT00950000182895"/>
<dbReference type="HOGENOM" id="CLU_148322_2_1_1"/>
<dbReference type="InParanoid" id="P55854"/>
<dbReference type="OMA" id="CHRPCIC"/>
<dbReference type="PAN-GO" id="P55854">
    <property type="GO annotations" value="4 GO annotations based on evolutionary models"/>
</dbReference>
<dbReference type="PhylomeDB" id="P55854"/>
<dbReference type="TreeFam" id="TF315116"/>
<dbReference type="PathwayCommons" id="P55854"/>
<dbReference type="Reactome" id="R-HSA-3065676">
    <property type="pathway name" value="SUMO is conjugated to E1 (UBA2:SAE1)"/>
</dbReference>
<dbReference type="Reactome" id="R-HSA-3065678">
    <property type="pathway name" value="SUMO is transferred from E1 to E2 (UBE2I, UBC9)"/>
</dbReference>
<dbReference type="Reactome" id="R-HSA-3065679">
    <property type="pathway name" value="SUMO is proteolytically processed"/>
</dbReference>
<dbReference type="Reactome" id="R-HSA-3108214">
    <property type="pathway name" value="SUMOylation of DNA damage response and repair proteins"/>
</dbReference>
<dbReference type="Reactome" id="R-HSA-3232118">
    <property type="pathway name" value="SUMOylation of transcription factors"/>
</dbReference>
<dbReference type="Reactome" id="R-HSA-3899300">
    <property type="pathway name" value="SUMOylation of transcription cofactors"/>
</dbReference>
<dbReference type="Reactome" id="R-HSA-4090294">
    <property type="pathway name" value="SUMOylation of intracellular receptors"/>
</dbReference>
<dbReference type="Reactome" id="R-HSA-4551638">
    <property type="pathway name" value="SUMOylation of chromatin organization proteins"/>
</dbReference>
<dbReference type="Reactome" id="R-HSA-4615885">
    <property type="pathway name" value="SUMOylation of DNA replication proteins"/>
</dbReference>
<dbReference type="Reactome" id="R-HSA-4755510">
    <property type="pathway name" value="SUMOylation of immune response proteins"/>
</dbReference>
<dbReference type="Reactome" id="R-HSA-5696395">
    <property type="pathway name" value="Formation of Incision Complex in GG-NER"/>
</dbReference>
<dbReference type="SignaLink" id="P55854"/>
<dbReference type="BioGRID-ORCS" id="6612">
    <property type="hits" value="11 hits in 1161 CRISPR screens"/>
</dbReference>
<dbReference type="CD-CODE" id="B5B9A610">
    <property type="entry name" value="PML body"/>
</dbReference>
<dbReference type="CD-CODE" id="E0298522">
    <property type="entry name" value="Synthetic Condensate 000165"/>
</dbReference>
<dbReference type="ChiTaRS" id="SUMO3">
    <property type="organism name" value="human"/>
</dbReference>
<dbReference type="EvolutionaryTrace" id="P55854"/>
<dbReference type="GeneWiki" id="SUMO3"/>
<dbReference type="GenomeRNAi" id="6612"/>
<dbReference type="Pharos" id="P55854">
    <property type="development level" value="Tbio"/>
</dbReference>
<dbReference type="PRO" id="PR:P55854"/>
<dbReference type="Proteomes" id="UP000005640">
    <property type="component" value="Chromosome 21"/>
</dbReference>
<dbReference type="RNAct" id="P55854">
    <property type="molecule type" value="protein"/>
</dbReference>
<dbReference type="Bgee" id="ENSG00000184900">
    <property type="expression patterns" value="Expressed in endothelial cell and 215 other cell types or tissues"/>
</dbReference>
<dbReference type="ExpressionAtlas" id="P55854">
    <property type="expression patterns" value="baseline and differential"/>
</dbReference>
<dbReference type="GO" id="GO:0005737">
    <property type="term" value="C:cytoplasm"/>
    <property type="evidence" value="ECO:0007669"/>
    <property type="project" value="UniProtKB-SubCell"/>
</dbReference>
<dbReference type="GO" id="GO:0000776">
    <property type="term" value="C:kinetochore"/>
    <property type="evidence" value="ECO:0000304"/>
    <property type="project" value="ProtInc"/>
</dbReference>
<dbReference type="GO" id="GO:0005654">
    <property type="term" value="C:nucleoplasm"/>
    <property type="evidence" value="ECO:0000304"/>
    <property type="project" value="Reactome"/>
</dbReference>
<dbReference type="GO" id="GO:0005634">
    <property type="term" value="C:nucleus"/>
    <property type="evidence" value="ECO:0000314"/>
    <property type="project" value="UniProtKB"/>
</dbReference>
<dbReference type="GO" id="GO:0016605">
    <property type="term" value="C:PML body"/>
    <property type="evidence" value="ECO:0000314"/>
    <property type="project" value="UniProtKB"/>
</dbReference>
<dbReference type="GO" id="GO:0031386">
    <property type="term" value="F:protein tag activity"/>
    <property type="evidence" value="ECO:0000318"/>
    <property type="project" value="GO_Central"/>
</dbReference>
<dbReference type="GO" id="GO:0044389">
    <property type="term" value="F:ubiquitin-like protein ligase binding"/>
    <property type="evidence" value="ECO:0000318"/>
    <property type="project" value="GO_Central"/>
</dbReference>
<dbReference type="GO" id="GO:0043392">
    <property type="term" value="P:negative regulation of DNA binding"/>
    <property type="evidence" value="ECO:0000314"/>
    <property type="project" value="CAFA"/>
</dbReference>
<dbReference type="GO" id="GO:0016925">
    <property type="term" value="P:protein sumoylation"/>
    <property type="evidence" value="ECO:0000314"/>
    <property type="project" value="UniProtKB"/>
</dbReference>
<dbReference type="GO" id="GO:1900180">
    <property type="term" value="P:regulation of protein localization to nucleus"/>
    <property type="evidence" value="ECO:0000314"/>
    <property type="project" value="UniProtKB"/>
</dbReference>
<dbReference type="CDD" id="cd16115">
    <property type="entry name" value="Ubl_SUMO2_3_4"/>
    <property type="match status" value="1"/>
</dbReference>
<dbReference type="FunFam" id="3.10.20.90:FF:000022">
    <property type="entry name" value="Small ubiquitin-related modifier"/>
    <property type="match status" value="1"/>
</dbReference>
<dbReference type="Gene3D" id="3.10.20.90">
    <property type="entry name" value="Phosphatidylinositol 3-kinase Catalytic Subunit, Chain A, domain 1"/>
    <property type="match status" value="1"/>
</dbReference>
<dbReference type="IDEAL" id="IID00350"/>
<dbReference type="InterPro" id="IPR022617">
    <property type="entry name" value="Rad60/SUMO-like_dom"/>
</dbReference>
<dbReference type="InterPro" id="IPR000626">
    <property type="entry name" value="Ubiquitin-like_dom"/>
</dbReference>
<dbReference type="InterPro" id="IPR029071">
    <property type="entry name" value="Ubiquitin-like_domsf"/>
</dbReference>
<dbReference type="PANTHER" id="PTHR10562">
    <property type="entry name" value="SMALL UBIQUITIN-RELATED MODIFIER"/>
    <property type="match status" value="1"/>
</dbReference>
<dbReference type="Pfam" id="PF11976">
    <property type="entry name" value="Rad60-SLD"/>
    <property type="match status" value="1"/>
</dbReference>
<dbReference type="SMART" id="SM00213">
    <property type="entry name" value="UBQ"/>
    <property type="match status" value="1"/>
</dbReference>
<dbReference type="SUPFAM" id="SSF54236">
    <property type="entry name" value="Ubiquitin-like"/>
    <property type="match status" value="1"/>
</dbReference>
<dbReference type="PROSITE" id="PS50053">
    <property type="entry name" value="UBIQUITIN_2"/>
    <property type="match status" value="1"/>
</dbReference>
<gene>
    <name evidence="15" type="primary">SUMO3</name>
    <name evidence="13" type="synonym">SMT3A</name>
    <name evidence="15" type="synonym">SMT3H1</name>
</gene>
<sequence>MSEEKPKEGVKTENDHINLKVAGQDGSVVQFKIKRHTPLSKLMKAYCERQGLSMRQIRFRFDGQPINETDTPAQLEMEDEDTIDVFQQQTGGVPESSLAGHSF</sequence>
<protein>
    <recommendedName>
        <fullName evidence="14">Small ubiquitin-related modifier 3</fullName>
        <shortName evidence="14">SUMO-3</shortName>
    </recommendedName>
    <alternativeName>
        <fullName evidence="15">SMT3 homolog 1</fullName>
    </alternativeName>
    <alternativeName>
        <fullName evidence="11">SUMO-2</fullName>
    </alternativeName>
    <alternativeName>
        <fullName evidence="13">Ubiquitin-like protein SMT3A</fullName>
        <shortName evidence="13">Smt3A</shortName>
    </alternativeName>
</protein>
<keyword id="KW-0002">3D-structure</keyword>
<keyword id="KW-0025">Alternative splicing</keyword>
<keyword id="KW-0963">Cytoplasm</keyword>
<keyword id="KW-1017">Isopeptide bond</keyword>
<keyword id="KW-0539">Nucleus</keyword>
<keyword id="KW-1267">Proteomics identification</keyword>
<keyword id="KW-1185">Reference proteome</keyword>
<keyword id="KW-0832">Ubl conjugation</keyword>
<keyword id="KW-0833">Ubl conjugation pathway</keyword>